<protein>
    <recommendedName>
        <fullName evidence="1">Peptide chain release factor 2</fullName>
        <shortName evidence="1">RF-2</shortName>
    </recommendedName>
</protein>
<comment type="function">
    <text evidence="1">Peptide chain release factor 2 directs the termination of translation in response to the peptide chain termination codons UGA and UAA.</text>
</comment>
<comment type="subcellular location">
    <subcellularLocation>
        <location evidence="1">Cytoplasm</location>
    </subcellularLocation>
</comment>
<comment type="PTM">
    <text evidence="1">Methylated by PrmC. Methylation increases the termination efficiency of RF2.</text>
</comment>
<comment type="similarity">
    <text evidence="1">Belongs to the prokaryotic/mitochondrial release factor family.</text>
</comment>
<reference key="1">
    <citation type="journal article" date="2004" name="Proc. Natl. Acad. Sci. U.S.A.">
        <title>The complete genomic sequence of Nocardia farcinica IFM 10152.</title>
        <authorList>
            <person name="Ishikawa J."/>
            <person name="Yamashita A."/>
            <person name="Mikami Y."/>
            <person name="Hoshino Y."/>
            <person name="Kurita H."/>
            <person name="Hotta K."/>
            <person name="Shiba T."/>
            <person name="Hattori M."/>
        </authorList>
    </citation>
    <scope>NUCLEOTIDE SEQUENCE [LARGE SCALE GENOMIC DNA]</scope>
    <source>
        <strain>IFM 10152</strain>
    </source>
</reference>
<feature type="chain" id="PRO_0000166836" description="Peptide chain release factor 2">
    <location>
        <begin position="1"/>
        <end position="372"/>
    </location>
</feature>
<feature type="modified residue" description="N5-methylglutamine" evidence="1">
    <location>
        <position position="253"/>
    </location>
</feature>
<sequence length="372" mass="41970">MHPDVSADLAELDATLKTVESVLDIEELRRRIDELEHQAADPDLWNDQDHAQRVTSELSHAQGELRRVEDLRRRLEDLPVLYELAEGEEGEARTAALEEADAERAALHSDVEAMEVRTLLSGEYDKREALVNIRSGAGGVDAADWAEMLMRMYIRWADRHGYPVEVYDTSYAEEAGIKSATFAVKTPYAYGTLSVEMGTHRLVRISPFDNQGRRQTSFAEVEVLPVVETTDHIEVPETEIRVDVYRSSGPGGQSVNTTDSAVRITHIPTGIVVTCQNEKSQLQNKISAMRVLQAKLLERKRQEERAEMDALKTNEGASWGNQMRSYVLHPYQMVKDLRTNYEVNNPSAVLNGDIDGFIESGIRWRMRESQAS</sequence>
<dbReference type="EMBL" id="AP006618">
    <property type="protein sequence ID" value="BAD59339.1"/>
    <property type="molecule type" value="Genomic_DNA"/>
</dbReference>
<dbReference type="RefSeq" id="WP_011211023.1">
    <property type="nucleotide sequence ID" value="NC_006361.1"/>
</dbReference>
<dbReference type="SMR" id="Q5YR52"/>
<dbReference type="STRING" id="247156.NFA_44880"/>
<dbReference type="GeneID" id="61135094"/>
<dbReference type="KEGG" id="nfa:NFA_44880"/>
<dbReference type="eggNOG" id="COG1186">
    <property type="taxonomic scope" value="Bacteria"/>
</dbReference>
<dbReference type="HOGENOM" id="CLU_036856_6_0_11"/>
<dbReference type="OrthoDB" id="9806673at2"/>
<dbReference type="Proteomes" id="UP000006820">
    <property type="component" value="Chromosome"/>
</dbReference>
<dbReference type="GO" id="GO:0005737">
    <property type="term" value="C:cytoplasm"/>
    <property type="evidence" value="ECO:0007669"/>
    <property type="project" value="UniProtKB-SubCell"/>
</dbReference>
<dbReference type="GO" id="GO:0016149">
    <property type="term" value="F:translation release factor activity, codon specific"/>
    <property type="evidence" value="ECO:0007669"/>
    <property type="project" value="UniProtKB-UniRule"/>
</dbReference>
<dbReference type="FunFam" id="3.30.160.20:FF:000010">
    <property type="entry name" value="Peptide chain release factor 2"/>
    <property type="match status" value="1"/>
</dbReference>
<dbReference type="Gene3D" id="3.30.160.20">
    <property type="match status" value="1"/>
</dbReference>
<dbReference type="Gene3D" id="3.30.70.1660">
    <property type="match status" value="1"/>
</dbReference>
<dbReference type="Gene3D" id="1.20.58.410">
    <property type="entry name" value="Release factor"/>
    <property type="match status" value="1"/>
</dbReference>
<dbReference type="HAMAP" id="MF_00094">
    <property type="entry name" value="Rel_fac_2"/>
    <property type="match status" value="1"/>
</dbReference>
<dbReference type="InterPro" id="IPR005139">
    <property type="entry name" value="PCRF"/>
</dbReference>
<dbReference type="InterPro" id="IPR000352">
    <property type="entry name" value="Pep_chain_release_fac_I"/>
</dbReference>
<dbReference type="InterPro" id="IPR045853">
    <property type="entry name" value="Pep_chain_release_fac_I_sf"/>
</dbReference>
<dbReference type="InterPro" id="IPR004374">
    <property type="entry name" value="PrfB"/>
</dbReference>
<dbReference type="NCBIfam" id="TIGR00020">
    <property type="entry name" value="prfB"/>
    <property type="match status" value="1"/>
</dbReference>
<dbReference type="PANTHER" id="PTHR43116:SF3">
    <property type="entry name" value="CLASS I PEPTIDE CHAIN RELEASE FACTOR"/>
    <property type="match status" value="1"/>
</dbReference>
<dbReference type="PANTHER" id="PTHR43116">
    <property type="entry name" value="PEPTIDE CHAIN RELEASE FACTOR 2"/>
    <property type="match status" value="1"/>
</dbReference>
<dbReference type="Pfam" id="PF03462">
    <property type="entry name" value="PCRF"/>
    <property type="match status" value="1"/>
</dbReference>
<dbReference type="Pfam" id="PF00472">
    <property type="entry name" value="RF-1"/>
    <property type="match status" value="1"/>
</dbReference>
<dbReference type="SMART" id="SM00937">
    <property type="entry name" value="PCRF"/>
    <property type="match status" value="1"/>
</dbReference>
<dbReference type="SUPFAM" id="SSF75620">
    <property type="entry name" value="Release factor"/>
    <property type="match status" value="1"/>
</dbReference>
<dbReference type="PROSITE" id="PS00745">
    <property type="entry name" value="RF_PROK_I"/>
    <property type="match status" value="1"/>
</dbReference>
<name>RF2_NOCFA</name>
<evidence type="ECO:0000255" key="1">
    <source>
        <dbReference type="HAMAP-Rule" id="MF_00094"/>
    </source>
</evidence>
<accession>Q5YR52</accession>
<organism>
    <name type="scientific">Nocardia farcinica (strain IFM 10152)</name>
    <dbReference type="NCBI Taxonomy" id="247156"/>
    <lineage>
        <taxon>Bacteria</taxon>
        <taxon>Bacillati</taxon>
        <taxon>Actinomycetota</taxon>
        <taxon>Actinomycetes</taxon>
        <taxon>Mycobacteriales</taxon>
        <taxon>Nocardiaceae</taxon>
        <taxon>Nocardia</taxon>
    </lineage>
</organism>
<keyword id="KW-0963">Cytoplasm</keyword>
<keyword id="KW-0488">Methylation</keyword>
<keyword id="KW-0648">Protein biosynthesis</keyword>
<keyword id="KW-1185">Reference proteome</keyword>
<gene>
    <name evidence="1" type="primary">prfB</name>
    <name type="ordered locus">NFA_44880</name>
</gene>
<proteinExistence type="inferred from homology"/>